<feature type="chain" id="PRO_0000272298" description="Leucine-rich repeat-containing protein 28">
    <location>
        <begin position="1"/>
        <end position="367"/>
    </location>
</feature>
<feature type="repeat" description="LRR 1">
    <location>
        <begin position="16"/>
        <end position="36"/>
    </location>
</feature>
<feature type="repeat" description="LRR 2">
    <location>
        <begin position="42"/>
        <end position="63"/>
    </location>
</feature>
<feature type="repeat" description="LRR 3">
    <location>
        <begin position="66"/>
        <end position="87"/>
    </location>
</feature>
<feature type="repeat" description="LRR 4">
    <location>
        <begin position="89"/>
        <end position="110"/>
    </location>
</feature>
<feature type="repeat" description="LRR 5">
    <location>
        <begin position="112"/>
        <end position="133"/>
    </location>
</feature>
<feature type="repeat" description="LRR 6">
    <location>
        <begin position="135"/>
        <end position="156"/>
    </location>
</feature>
<feature type="repeat" description="LRR 7">
    <location>
        <begin position="158"/>
        <end position="180"/>
    </location>
</feature>
<feature type="repeat" description="LRR 8">
    <location>
        <begin position="181"/>
        <end position="202"/>
    </location>
</feature>
<feature type="repeat" description="LRR 9">
    <location>
        <begin position="204"/>
        <end position="226"/>
    </location>
</feature>
<feature type="splice variant" id="VSP_022395" description="In isoform 3." evidence="2">
    <original>MASELCKTISVARLEKHKNLFLNYRNLHHFPLELLKDEGLQYLERLYMKRNSLTSLPENLAQKLPNLVELYLHSNNIVVVPEAIGSLVKLQCLDLSDNALEIVCPEIGRLRALRHLRLANNQLQFLPP</original>
    <variation>MFMGIVAATDFIWLNCYNIDSFCLFQFIRMQFILILILVV</variation>
    <location>
        <begin position="1"/>
        <end position="128"/>
    </location>
</feature>
<feature type="splice variant" id="VSP_022393" description="In isoform 2." evidence="1">
    <original>DLNFLSPISLPRSLLELLHC</original>
    <variation>GRQLLVLWLTAAPPSVCRLLTC</variation>
    <location>
        <begin position="291"/>
        <end position="310"/>
    </location>
</feature>
<feature type="splice variant" id="VSP_022394" description="In isoform 2." evidence="1">
    <location>
        <begin position="311"/>
        <end position="367"/>
    </location>
</feature>
<feature type="sequence variant" id="VAR_034084" description="In dbSNP:rs11857384.">
    <original>R</original>
    <variation>H</variation>
    <location>
        <position position="168"/>
    </location>
</feature>
<dbReference type="EMBL" id="AY358082">
    <property type="protein sequence ID" value="AAQ88449.1"/>
    <property type="molecule type" value="mRNA"/>
</dbReference>
<dbReference type="EMBL" id="AK127177">
    <property type="protein sequence ID" value="BAC86870.1"/>
    <property type="molecule type" value="mRNA"/>
</dbReference>
<dbReference type="EMBL" id="AK292887">
    <property type="protein sequence ID" value="BAF85576.1"/>
    <property type="molecule type" value="mRNA"/>
</dbReference>
<dbReference type="EMBL" id="AC022819">
    <property type="status" value="NOT_ANNOTATED_CDS"/>
    <property type="molecule type" value="Genomic_DNA"/>
</dbReference>
<dbReference type="EMBL" id="AC037479">
    <property type="status" value="NOT_ANNOTATED_CDS"/>
    <property type="molecule type" value="Genomic_DNA"/>
</dbReference>
<dbReference type="EMBL" id="CH471101">
    <property type="protein sequence ID" value="EAX02243.1"/>
    <property type="molecule type" value="Genomic_DNA"/>
</dbReference>
<dbReference type="EMBL" id="BC047306">
    <property type="protein sequence ID" value="AAH47306.1"/>
    <property type="molecule type" value="mRNA"/>
</dbReference>
<dbReference type="CCDS" id="CCDS10380.1">
    <molecule id="Q86X40-1"/>
</dbReference>
<dbReference type="CCDS" id="CCDS66873.1">
    <molecule id="Q86X40-2"/>
</dbReference>
<dbReference type="RefSeq" id="NP_001271329.1">
    <molecule id="Q86X40-2"/>
    <property type="nucleotide sequence ID" value="NM_001284400.3"/>
</dbReference>
<dbReference type="RefSeq" id="NP_001308604.1">
    <molecule id="Q86X40-1"/>
    <property type="nucleotide sequence ID" value="NM_001321675.2"/>
</dbReference>
<dbReference type="RefSeq" id="NP_653199.2">
    <molecule id="Q86X40-1"/>
    <property type="nucleotide sequence ID" value="NM_144598.4"/>
</dbReference>
<dbReference type="RefSeq" id="XP_011519520.1">
    <molecule id="Q86X40-1"/>
    <property type="nucleotide sequence ID" value="XM_011521218.3"/>
</dbReference>
<dbReference type="RefSeq" id="XP_054233248.1">
    <molecule id="Q86X40-1"/>
    <property type="nucleotide sequence ID" value="XM_054377273.1"/>
</dbReference>
<dbReference type="SMR" id="Q86X40"/>
<dbReference type="BioGRID" id="125824">
    <property type="interactions" value="28"/>
</dbReference>
<dbReference type="FunCoup" id="Q86X40">
    <property type="interactions" value="476"/>
</dbReference>
<dbReference type="IntAct" id="Q86X40">
    <property type="interactions" value="8"/>
</dbReference>
<dbReference type="STRING" id="9606.ENSP00000304923"/>
<dbReference type="iPTMnet" id="Q86X40"/>
<dbReference type="PhosphoSitePlus" id="Q86X40"/>
<dbReference type="BioMuta" id="LRRC28"/>
<dbReference type="DMDM" id="74762458"/>
<dbReference type="jPOST" id="Q86X40"/>
<dbReference type="MassIVE" id="Q86X40"/>
<dbReference type="PaxDb" id="9606-ENSP00000304923"/>
<dbReference type="PeptideAtlas" id="Q86X40"/>
<dbReference type="ProteomicsDB" id="70233">
    <molecule id="Q86X40-1"/>
</dbReference>
<dbReference type="ProteomicsDB" id="70234">
    <molecule id="Q86X40-2"/>
</dbReference>
<dbReference type="ProteomicsDB" id="70235">
    <molecule id="Q86X40-3"/>
</dbReference>
<dbReference type="Pumba" id="Q86X40"/>
<dbReference type="Antibodypedia" id="29175">
    <property type="antibodies" value="108 antibodies from 17 providers"/>
</dbReference>
<dbReference type="DNASU" id="123355"/>
<dbReference type="Ensembl" id="ENST00000301981.8">
    <molecule id="Q86X40-1"/>
    <property type="protein sequence ID" value="ENSP00000304923.3"/>
    <property type="gene ID" value="ENSG00000168904.15"/>
</dbReference>
<dbReference type="Ensembl" id="ENST00000447360.6">
    <molecule id="Q86X40-2"/>
    <property type="protein sequence ID" value="ENSP00000404520.2"/>
    <property type="gene ID" value="ENSG00000168904.15"/>
</dbReference>
<dbReference type="GeneID" id="123355"/>
<dbReference type="KEGG" id="hsa:123355"/>
<dbReference type="MANE-Select" id="ENST00000301981.8">
    <property type="protein sequence ID" value="ENSP00000304923.3"/>
    <property type="RefSeq nucleotide sequence ID" value="NM_144598.5"/>
    <property type="RefSeq protein sequence ID" value="NP_653199.2"/>
</dbReference>
<dbReference type="UCSC" id="uc002bva.3">
    <molecule id="Q86X40-1"/>
    <property type="organism name" value="human"/>
</dbReference>
<dbReference type="AGR" id="HGNC:28355"/>
<dbReference type="CTD" id="123355"/>
<dbReference type="DisGeNET" id="123355"/>
<dbReference type="GeneCards" id="LRRC28"/>
<dbReference type="HGNC" id="HGNC:28355">
    <property type="gene designation" value="LRRC28"/>
</dbReference>
<dbReference type="HPA" id="ENSG00000168904">
    <property type="expression patterns" value="Tissue enhanced (liver)"/>
</dbReference>
<dbReference type="neXtProt" id="NX_Q86X40"/>
<dbReference type="OpenTargets" id="ENSG00000168904"/>
<dbReference type="PharmGKB" id="PA134864287"/>
<dbReference type="VEuPathDB" id="HostDB:ENSG00000168904"/>
<dbReference type="eggNOG" id="KOG0619">
    <property type="taxonomic scope" value="Eukaryota"/>
</dbReference>
<dbReference type="GeneTree" id="ENSGT00940000157771"/>
<dbReference type="HOGENOM" id="CLU_064321_1_0_1"/>
<dbReference type="InParanoid" id="Q86X40"/>
<dbReference type="OMA" id="LYHTCHR"/>
<dbReference type="OrthoDB" id="2021138at2759"/>
<dbReference type="PAN-GO" id="Q86X40">
    <property type="GO annotations" value="0 GO annotations based on evolutionary models"/>
</dbReference>
<dbReference type="PhylomeDB" id="Q86X40"/>
<dbReference type="TreeFam" id="TF332379"/>
<dbReference type="PathwayCommons" id="Q86X40"/>
<dbReference type="SignaLink" id="Q86X40"/>
<dbReference type="BioGRID-ORCS" id="123355">
    <property type="hits" value="30 hits in 1152 CRISPR screens"/>
</dbReference>
<dbReference type="ChiTaRS" id="LRRC28">
    <property type="organism name" value="human"/>
</dbReference>
<dbReference type="GenomeRNAi" id="123355"/>
<dbReference type="Pharos" id="Q86X40">
    <property type="development level" value="Tdark"/>
</dbReference>
<dbReference type="PRO" id="PR:Q86X40"/>
<dbReference type="Proteomes" id="UP000005640">
    <property type="component" value="Chromosome 15"/>
</dbReference>
<dbReference type="RNAct" id="Q86X40">
    <property type="molecule type" value="protein"/>
</dbReference>
<dbReference type="Bgee" id="ENSG00000168904">
    <property type="expression patterns" value="Expressed in ileal mucosa and 142 other cell types or tissues"/>
</dbReference>
<dbReference type="ExpressionAtlas" id="Q86X40">
    <property type="expression patterns" value="baseline and differential"/>
</dbReference>
<dbReference type="GO" id="GO:0035556">
    <property type="term" value="P:intracellular signal transduction"/>
    <property type="evidence" value="ECO:0000318"/>
    <property type="project" value="GO_Central"/>
</dbReference>
<dbReference type="Gene3D" id="3.80.10.10">
    <property type="entry name" value="Ribonuclease Inhibitor"/>
    <property type="match status" value="1"/>
</dbReference>
<dbReference type="InterPro" id="IPR001611">
    <property type="entry name" value="Leu-rich_rpt"/>
</dbReference>
<dbReference type="InterPro" id="IPR003591">
    <property type="entry name" value="Leu-rich_rpt_typical-subtyp"/>
</dbReference>
<dbReference type="InterPro" id="IPR032675">
    <property type="entry name" value="LRR_dom_sf"/>
</dbReference>
<dbReference type="InterPro" id="IPR050216">
    <property type="entry name" value="LRR_domain-containing"/>
</dbReference>
<dbReference type="InterPro" id="IPR055414">
    <property type="entry name" value="LRR_R13L4/SHOC2-like"/>
</dbReference>
<dbReference type="PANTHER" id="PTHR48051">
    <property type="match status" value="1"/>
</dbReference>
<dbReference type="PANTHER" id="PTHR48051:SF12">
    <property type="entry name" value="LEUCINE-RICH REPEAT-CONTAINING PROTEIN 28"/>
    <property type="match status" value="1"/>
</dbReference>
<dbReference type="Pfam" id="PF23598">
    <property type="entry name" value="LRR_14"/>
    <property type="match status" value="1"/>
</dbReference>
<dbReference type="Pfam" id="PF13855">
    <property type="entry name" value="LRR_8"/>
    <property type="match status" value="1"/>
</dbReference>
<dbReference type="SMART" id="SM00364">
    <property type="entry name" value="LRR_BAC"/>
    <property type="match status" value="4"/>
</dbReference>
<dbReference type="SMART" id="SM00369">
    <property type="entry name" value="LRR_TYP"/>
    <property type="match status" value="6"/>
</dbReference>
<dbReference type="SUPFAM" id="SSF52058">
    <property type="entry name" value="L domain-like"/>
    <property type="match status" value="1"/>
</dbReference>
<proteinExistence type="evidence at protein level"/>
<comment type="alternative products">
    <event type="alternative splicing"/>
    <isoform>
        <id>Q86X40-1</id>
        <name>1</name>
        <sequence type="displayed"/>
    </isoform>
    <isoform>
        <id>Q86X40-2</id>
        <name>2</name>
        <sequence type="described" ref="VSP_022393 VSP_022394"/>
    </isoform>
    <isoform>
        <id>Q86X40-3</id>
        <name>3</name>
        <sequence type="described" ref="VSP_022395"/>
    </isoform>
</comment>
<comment type="miscellaneous">
    <molecule>Isoform 3</molecule>
    <text evidence="3">May be produced at very low levels due to a premature stop codon in the mRNA, leading to nonsense-mediated mRNA decay.</text>
</comment>
<reference key="1">
    <citation type="journal article" date="2003" name="Genome Res.">
        <title>The secreted protein discovery initiative (SPDI), a large-scale effort to identify novel human secreted and transmembrane proteins: a bioinformatics assessment.</title>
        <authorList>
            <person name="Clark H.F."/>
            <person name="Gurney A.L."/>
            <person name="Abaya E."/>
            <person name="Baker K."/>
            <person name="Baldwin D.T."/>
            <person name="Brush J."/>
            <person name="Chen J."/>
            <person name="Chow B."/>
            <person name="Chui C."/>
            <person name="Crowley C."/>
            <person name="Currell B."/>
            <person name="Deuel B."/>
            <person name="Dowd P."/>
            <person name="Eaton D."/>
            <person name="Foster J.S."/>
            <person name="Grimaldi C."/>
            <person name="Gu Q."/>
            <person name="Hass P.E."/>
            <person name="Heldens S."/>
            <person name="Huang A."/>
            <person name="Kim H.S."/>
            <person name="Klimowski L."/>
            <person name="Jin Y."/>
            <person name="Johnson S."/>
            <person name="Lee J."/>
            <person name="Lewis L."/>
            <person name="Liao D."/>
            <person name="Mark M.R."/>
            <person name="Robbie E."/>
            <person name="Sanchez C."/>
            <person name="Schoenfeld J."/>
            <person name="Seshagiri S."/>
            <person name="Simmons L."/>
            <person name="Singh J."/>
            <person name="Smith V."/>
            <person name="Stinson J."/>
            <person name="Vagts A."/>
            <person name="Vandlen R.L."/>
            <person name="Watanabe C."/>
            <person name="Wieand D."/>
            <person name="Woods K."/>
            <person name="Xie M.-H."/>
            <person name="Yansura D.G."/>
            <person name="Yi S."/>
            <person name="Yu G."/>
            <person name="Yuan J."/>
            <person name="Zhang M."/>
            <person name="Zhang Z."/>
            <person name="Goddard A.D."/>
            <person name="Wood W.I."/>
            <person name="Godowski P.J."/>
            <person name="Gray A.M."/>
        </authorList>
    </citation>
    <scope>NUCLEOTIDE SEQUENCE [LARGE SCALE MRNA] (ISOFORM 2)</scope>
</reference>
<reference key="2">
    <citation type="journal article" date="2004" name="Nat. Genet.">
        <title>Complete sequencing and characterization of 21,243 full-length human cDNAs.</title>
        <authorList>
            <person name="Ota T."/>
            <person name="Suzuki Y."/>
            <person name="Nishikawa T."/>
            <person name="Otsuki T."/>
            <person name="Sugiyama T."/>
            <person name="Irie R."/>
            <person name="Wakamatsu A."/>
            <person name="Hayashi K."/>
            <person name="Sato H."/>
            <person name="Nagai K."/>
            <person name="Kimura K."/>
            <person name="Makita H."/>
            <person name="Sekine M."/>
            <person name="Obayashi M."/>
            <person name="Nishi T."/>
            <person name="Shibahara T."/>
            <person name="Tanaka T."/>
            <person name="Ishii S."/>
            <person name="Yamamoto J."/>
            <person name="Saito K."/>
            <person name="Kawai Y."/>
            <person name="Isono Y."/>
            <person name="Nakamura Y."/>
            <person name="Nagahari K."/>
            <person name="Murakami K."/>
            <person name="Yasuda T."/>
            <person name="Iwayanagi T."/>
            <person name="Wagatsuma M."/>
            <person name="Shiratori A."/>
            <person name="Sudo H."/>
            <person name="Hosoiri T."/>
            <person name="Kaku Y."/>
            <person name="Kodaira H."/>
            <person name="Kondo H."/>
            <person name="Sugawara M."/>
            <person name="Takahashi M."/>
            <person name="Kanda K."/>
            <person name="Yokoi T."/>
            <person name="Furuya T."/>
            <person name="Kikkawa E."/>
            <person name="Omura Y."/>
            <person name="Abe K."/>
            <person name="Kamihara K."/>
            <person name="Katsuta N."/>
            <person name="Sato K."/>
            <person name="Tanikawa M."/>
            <person name="Yamazaki M."/>
            <person name="Ninomiya K."/>
            <person name="Ishibashi T."/>
            <person name="Yamashita H."/>
            <person name="Murakawa K."/>
            <person name="Fujimori K."/>
            <person name="Tanai H."/>
            <person name="Kimata M."/>
            <person name="Watanabe M."/>
            <person name="Hiraoka S."/>
            <person name="Chiba Y."/>
            <person name="Ishida S."/>
            <person name="Ono Y."/>
            <person name="Takiguchi S."/>
            <person name="Watanabe S."/>
            <person name="Yosida M."/>
            <person name="Hotuta T."/>
            <person name="Kusano J."/>
            <person name="Kanehori K."/>
            <person name="Takahashi-Fujii A."/>
            <person name="Hara H."/>
            <person name="Tanase T.-O."/>
            <person name="Nomura Y."/>
            <person name="Togiya S."/>
            <person name="Komai F."/>
            <person name="Hara R."/>
            <person name="Takeuchi K."/>
            <person name="Arita M."/>
            <person name="Imose N."/>
            <person name="Musashino K."/>
            <person name="Yuuki H."/>
            <person name="Oshima A."/>
            <person name="Sasaki N."/>
            <person name="Aotsuka S."/>
            <person name="Yoshikawa Y."/>
            <person name="Matsunawa H."/>
            <person name="Ichihara T."/>
            <person name="Shiohata N."/>
            <person name="Sano S."/>
            <person name="Moriya S."/>
            <person name="Momiyama H."/>
            <person name="Satoh N."/>
            <person name="Takami S."/>
            <person name="Terashima Y."/>
            <person name="Suzuki O."/>
            <person name="Nakagawa S."/>
            <person name="Senoh A."/>
            <person name="Mizoguchi H."/>
            <person name="Goto Y."/>
            <person name="Shimizu F."/>
            <person name="Wakebe H."/>
            <person name="Hishigaki H."/>
            <person name="Watanabe T."/>
            <person name="Sugiyama A."/>
            <person name="Takemoto M."/>
            <person name="Kawakami B."/>
            <person name="Yamazaki M."/>
            <person name="Watanabe K."/>
            <person name="Kumagai A."/>
            <person name="Itakura S."/>
            <person name="Fukuzumi Y."/>
            <person name="Fujimori Y."/>
            <person name="Komiyama M."/>
            <person name="Tashiro H."/>
            <person name="Tanigami A."/>
            <person name="Fujiwara T."/>
            <person name="Ono T."/>
            <person name="Yamada K."/>
            <person name="Fujii Y."/>
            <person name="Ozaki K."/>
            <person name="Hirao M."/>
            <person name="Ohmori Y."/>
            <person name="Kawabata A."/>
            <person name="Hikiji T."/>
            <person name="Kobatake N."/>
            <person name="Inagaki H."/>
            <person name="Ikema Y."/>
            <person name="Okamoto S."/>
            <person name="Okitani R."/>
            <person name="Kawakami T."/>
            <person name="Noguchi S."/>
            <person name="Itoh T."/>
            <person name="Shigeta K."/>
            <person name="Senba T."/>
            <person name="Matsumura K."/>
            <person name="Nakajima Y."/>
            <person name="Mizuno T."/>
            <person name="Morinaga M."/>
            <person name="Sasaki M."/>
            <person name="Togashi T."/>
            <person name="Oyama M."/>
            <person name="Hata H."/>
            <person name="Watanabe M."/>
            <person name="Komatsu T."/>
            <person name="Mizushima-Sugano J."/>
            <person name="Satoh T."/>
            <person name="Shirai Y."/>
            <person name="Takahashi Y."/>
            <person name="Nakagawa K."/>
            <person name="Okumura K."/>
            <person name="Nagase T."/>
            <person name="Nomura N."/>
            <person name="Kikuchi H."/>
            <person name="Masuho Y."/>
            <person name="Yamashita R."/>
            <person name="Nakai K."/>
            <person name="Yada T."/>
            <person name="Nakamura Y."/>
            <person name="Ohara O."/>
            <person name="Isogai T."/>
            <person name="Sugano S."/>
        </authorList>
    </citation>
    <scope>NUCLEOTIDE SEQUENCE [LARGE SCALE MRNA] (ISOFORMS 1 AND 3)</scope>
    <source>
        <tissue>Placenta</tissue>
        <tissue>Trachea</tissue>
    </source>
</reference>
<reference key="3">
    <citation type="journal article" date="2006" name="Nature">
        <title>Analysis of the DNA sequence and duplication history of human chromosome 15.</title>
        <authorList>
            <person name="Zody M.C."/>
            <person name="Garber M."/>
            <person name="Sharpe T."/>
            <person name="Young S.K."/>
            <person name="Rowen L."/>
            <person name="O'Neill K."/>
            <person name="Whittaker C.A."/>
            <person name="Kamal M."/>
            <person name="Chang J.L."/>
            <person name="Cuomo C.A."/>
            <person name="Dewar K."/>
            <person name="FitzGerald M.G."/>
            <person name="Kodira C.D."/>
            <person name="Madan A."/>
            <person name="Qin S."/>
            <person name="Yang X."/>
            <person name="Abbasi N."/>
            <person name="Abouelleil A."/>
            <person name="Arachchi H.M."/>
            <person name="Baradarani L."/>
            <person name="Birditt B."/>
            <person name="Bloom S."/>
            <person name="Bloom T."/>
            <person name="Borowsky M.L."/>
            <person name="Burke J."/>
            <person name="Butler J."/>
            <person name="Cook A."/>
            <person name="DeArellano K."/>
            <person name="DeCaprio D."/>
            <person name="Dorris L. III"/>
            <person name="Dors M."/>
            <person name="Eichler E.E."/>
            <person name="Engels R."/>
            <person name="Fahey J."/>
            <person name="Fleetwood P."/>
            <person name="Friedman C."/>
            <person name="Gearin G."/>
            <person name="Hall J.L."/>
            <person name="Hensley G."/>
            <person name="Johnson E."/>
            <person name="Jones C."/>
            <person name="Kamat A."/>
            <person name="Kaur A."/>
            <person name="Locke D.P."/>
            <person name="Madan A."/>
            <person name="Munson G."/>
            <person name="Jaffe D.B."/>
            <person name="Lui A."/>
            <person name="Macdonald P."/>
            <person name="Mauceli E."/>
            <person name="Naylor J.W."/>
            <person name="Nesbitt R."/>
            <person name="Nicol R."/>
            <person name="O'Leary S.B."/>
            <person name="Ratcliffe A."/>
            <person name="Rounsley S."/>
            <person name="She X."/>
            <person name="Sneddon K.M.B."/>
            <person name="Stewart S."/>
            <person name="Sougnez C."/>
            <person name="Stone S.M."/>
            <person name="Topham K."/>
            <person name="Vincent D."/>
            <person name="Wang S."/>
            <person name="Zimmer A.R."/>
            <person name="Birren B.W."/>
            <person name="Hood L."/>
            <person name="Lander E.S."/>
            <person name="Nusbaum C."/>
        </authorList>
    </citation>
    <scope>NUCLEOTIDE SEQUENCE [LARGE SCALE GENOMIC DNA]</scope>
</reference>
<reference key="4">
    <citation type="submission" date="2005-07" db="EMBL/GenBank/DDBJ databases">
        <authorList>
            <person name="Mural R.J."/>
            <person name="Istrail S."/>
            <person name="Sutton G.G."/>
            <person name="Florea L."/>
            <person name="Halpern A.L."/>
            <person name="Mobarry C.M."/>
            <person name="Lippert R."/>
            <person name="Walenz B."/>
            <person name="Shatkay H."/>
            <person name="Dew I."/>
            <person name="Miller J.R."/>
            <person name="Flanigan M.J."/>
            <person name="Edwards N.J."/>
            <person name="Bolanos R."/>
            <person name="Fasulo D."/>
            <person name="Halldorsson B.V."/>
            <person name="Hannenhalli S."/>
            <person name="Turner R."/>
            <person name="Yooseph S."/>
            <person name="Lu F."/>
            <person name="Nusskern D.R."/>
            <person name="Shue B.C."/>
            <person name="Zheng X.H."/>
            <person name="Zhong F."/>
            <person name="Delcher A.L."/>
            <person name="Huson D.H."/>
            <person name="Kravitz S.A."/>
            <person name="Mouchard L."/>
            <person name="Reinert K."/>
            <person name="Remington K.A."/>
            <person name="Clark A.G."/>
            <person name="Waterman M.S."/>
            <person name="Eichler E.E."/>
            <person name="Adams M.D."/>
            <person name="Hunkapiller M.W."/>
            <person name="Myers E.W."/>
            <person name="Venter J.C."/>
        </authorList>
    </citation>
    <scope>NUCLEOTIDE SEQUENCE [LARGE SCALE GENOMIC DNA]</scope>
</reference>
<reference key="5">
    <citation type="journal article" date="2004" name="Genome Res.">
        <title>The status, quality, and expansion of the NIH full-length cDNA project: the Mammalian Gene Collection (MGC).</title>
        <authorList>
            <consortium name="The MGC Project Team"/>
        </authorList>
    </citation>
    <scope>NUCLEOTIDE SEQUENCE [LARGE SCALE MRNA] (ISOFORM 1)</scope>
    <source>
        <tissue>Placenta</tissue>
    </source>
</reference>
<accession>Q86X40</accession>
<accession>A8KA22</accession>
<accession>Q6UY49</accession>
<accession>Q6ZSS6</accession>
<gene>
    <name type="primary">LRRC28</name>
    <name type="ORF">UNQ436/PRO867</name>
</gene>
<evidence type="ECO:0000303" key="1">
    <source>
    </source>
</evidence>
<evidence type="ECO:0000303" key="2">
    <source>
    </source>
</evidence>
<evidence type="ECO:0000305" key="3"/>
<keyword id="KW-0025">Alternative splicing</keyword>
<keyword id="KW-0433">Leucine-rich repeat</keyword>
<keyword id="KW-1267">Proteomics identification</keyword>
<keyword id="KW-1185">Reference proteome</keyword>
<keyword id="KW-0677">Repeat</keyword>
<sequence>MASELCKTISVARLEKHKNLFLNYRNLHHFPLELLKDEGLQYLERLYMKRNSLTSLPENLAQKLPNLVELYLHSNNIVVVPEAIGSLVKLQCLDLSDNALEIVCPEIGRLRALRHLRLANNQLQFLPPEVGDLKELQTLDISTNRLLTLPERLHMCLSLQYLTVDRNRLWYVPRHLCQLPSLNELSMAGNRLAFLPLDLGRSRELQYVYVDNNIHLKGLPSYLYNKVIGCSGCGAPIQVSEVKLLSFSSGQRTVFLPAEVKAIGTEHDHVLPLQELAMRGLYHTYHSLLKDLNFLSPISLPRSLLELLHCPLGHCHRCSEPMFTIVYPKLFPLRETPMAGLHQWKTTVSFVAYCCSTQCLQTFDLLS</sequence>
<protein>
    <recommendedName>
        <fullName>Leucine-rich repeat-containing protein 28</fullName>
    </recommendedName>
</protein>
<organism>
    <name type="scientific">Homo sapiens</name>
    <name type="common">Human</name>
    <dbReference type="NCBI Taxonomy" id="9606"/>
    <lineage>
        <taxon>Eukaryota</taxon>
        <taxon>Metazoa</taxon>
        <taxon>Chordata</taxon>
        <taxon>Craniata</taxon>
        <taxon>Vertebrata</taxon>
        <taxon>Euteleostomi</taxon>
        <taxon>Mammalia</taxon>
        <taxon>Eutheria</taxon>
        <taxon>Euarchontoglires</taxon>
        <taxon>Primates</taxon>
        <taxon>Haplorrhini</taxon>
        <taxon>Catarrhini</taxon>
        <taxon>Hominidae</taxon>
        <taxon>Homo</taxon>
    </lineage>
</organism>
<name>LRC28_HUMAN</name>